<accession>Q3AHK4</accession>
<dbReference type="EMBL" id="CP000110">
    <property type="protein sequence ID" value="ABB35928.1"/>
    <property type="molecule type" value="Genomic_DNA"/>
</dbReference>
<dbReference type="RefSeq" id="WP_011365132.1">
    <property type="nucleotide sequence ID" value="NC_007516.1"/>
</dbReference>
<dbReference type="SMR" id="Q3AHK4"/>
<dbReference type="STRING" id="110662.Syncc9605_2189"/>
<dbReference type="KEGG" id="syd:Syncc9605_2189"/>
<dbReference type="eggNOG" id="COG0712">
    <property type="taxonomic scope" value="Bacteria"/>
</dbReference>
<dbReference type="HOGENOM" id="CLU_085114_4_0_3"/>
<dbReference type="OrthoDB" id="9802471at2"/>
<dbReference type="GO" id="GO:0031676">
    <property type="term" value="C:plasma membrane-derived thylakoid membrane"/>
    <property type="evidence" value="ECO:0007669"/>
    <property type="project" value="UniProtKB-SubCell"/>
</dbReference>
<dbReference type="GO" id="GO:0045259">
    <property type="term" value="C:proton-transporting ATP synthase complex"/>
    <property type="evidence" value="ECO:0007669"/>
    <property type="project" value="UniProtKB-KW"/>
</dbReference>
<dbReference type="GO" id="GO:0046933">
    <property type="term" value="F:proton-transporting ATP synthase activity, rotational mechanism"/>
    <property type="evidence" value="ECO:0007669"/>
    <property type="project" value="UniProtKB-UniRule"/>
</dbReference>
<dbReference type="Gene3D" id="1.10.520.20">
    <property type="entry name" value="N-terminal domain of the delta subunit of the F1F0-ATP synthase"/>
    <property type="match status" value="1"/>
</dbReference>
<dbReference type="HAMAP" id="MF_01416">
    <property type="entry name" value="ATP_synth_delta_bact"/>
    <property type="match status" value="1"/>
</dbReference>
<dbReference type="InterPro" id="IPR026015">
    <property type="entry name" value="ATP_synth_OSCP/delta_N_sf"/>
</dbReference>
<dbReference type="InterPro" id="IPR000711">
    <property type="entry name" value="ATPase_OSCP/dsu"/>
</dbReference>
<dbReference type="NCBIfam" id="TIGR01145">
    <property type="entry name" value="ATP_synt_delta"/>
    <property type="match status" value="1"/>
</dbReference>
<dbReference type="PANTHER" id="PTHR11910">
    <property type="entry name" value="ATP SYNTHASE DELTA CHAIN"/>
    <property type="match status" value="1"/>
</dbReference>
<dbReference type="Pfam" id="PF00213">
    <property type="entry name" value="OSCP"/>
    <property type="match status" value="1"/>
</dbReference>
<dbReference type="PRINTS" id="PR00125">
    <property type="entry name" value="ATPASEDELTA"/>
</dbReference>
<dbReference type="SUPFAM" id="SSF47928">
    <property type="entry name" value="N-terminal domain of the delta subunit of the F1F0-ATP synthase"/>
    <property type="match status" value="1"/>
</dbReference>
<sequence>MPLLNSLATPYAEALLQVTEARGESETVADQCKQLLAIWNDSEDFRDAMVSPVLEPDAKKQALKALVGEDVTPSVFNLLKVLADRQRLIAFDAVMLRYLELYREQQGITLAQVRSAQSLTEDQQAALSKKVQAMAGTNKVDIDLSVDPSLIGGFVVSLGSQVIDASLSGQVRRLGLALAKAS</sequence>
<name>ATPD_SYNSC</name>
<protein>
    <recommendedName>
        <fullName evidence="1">ATP synthase subunit delta</fullName>
    </recommendedName>
    <alternativeName>
        <fullName evidence="1">ATP synthase F(1) sector subunit delta</fullName>
    </alternativeName>
    <alternativeName>
        <fullName evidence="1">F-type ATPase subunit delta</fullName>
        <shortName evidence="1">F-ATPase subunit delta</shortName>
    </alternativeName>
</protein>
<evidence type="ECO:0000255" key="1">
    <source>
        <dbReference type="HAMAP-Rule" id="MF_01416"/>
    </source>
</evidence>
<reference key="1">
    <citation type="submission" date="2005-07" db="EMBL/GenBank/DDBJ databases">
        <title>Complete sequence of Synechococcus sp. CC9605.</title>
        <authorList>
            <consortium name="US DOE Joint Genome Institute"/>
            <person name="Copeland A."/>
            <person name="Lucas S."/>
            <person name="Lapidus A."/>
            <person name="Barry K."/>
            <person name="Detter J.C."/>
            <person name="Glavina T."/>
            <person name="Hammon N."/>
            <person name="Israni S."/>
            <person name="Pitluck S."/>
            <person name="Schmutz J."/>
            <person name="Martinez M."/>
            <person name="Larimer F."/>
            <person name="Land M."/>
            <person name="Kyrpides N."/>
            <person name="Ivanova N."/>
            <person name="Richardson P."/>
        </authorList>
    </citation>
    <scope>NUCLEOTIDE SEQUENCE [LARGE SCALE GENOMIC DNA]</scope>
    <source>
        <strain>CC9605</strain>
    </source>
</reference>
<gene>
    <name evidence="1" type="primary">atpH</name>
    <name evidence="1" type="synonym">atpD</name>
    <name type="ordered locus">Syncc9605_2189</name>
</gene>
<organism>
    <name type="scientific">Synechococcus sp. (strain CC9605)</name>
    <dbReference type="NCBI Taxonomy" id="110662"/>
    <lineage>
        <taxon>Bacteria</taxon>
        <taxon>Bacillati</taxon>
        <taxon>Cyanobacteriota</taxon>
        <taxon>Cyanophyceae</taxon>
        <taxon>Synechococcales</taxon>
        <taxon>Synechococcaceae</taxon>
        <taxon>Synechococcus</taxon>
    </lineage>
</organism>
<proteinExistence type="inferred from homology"/>
<comment type="function">
    <text evidence="1">F(1)F(0) ATP synthase produces ATP from ADP in the presence of a proton or sodium gradient. F-type ATPases consist of two structural domains, F(1) containing the extramembraneous catalytic core and F(0) containing the membrane proton channel, linked together by a central stalk and a peripheral stalk. During catalysis, ATP synthesis in the catalytic domain of F(1) is coupled via a rotary mechanism of the central stalk subunits to proton translocation.</text>
</comment>
<comment type="function">
    <text evidence="1">This protein is part of the stalk that links CF(0) to CF(1). It either transmits conformational changes from CF(0) to CF(1) or is implicated in proton conduction.</text>
</comment>
<comment type="subunit">
    <text evidence="1">F-type ATPases have 2 components, F(1) - the catalytic core - and F(0) - the membrane proton channel. F(1) has five subunits: alpha(3), beta(3), gamma(1), delta(1), epsilon(1). CF(0) has four main subunits: a(1), b(1), b'(1) and c(10-14). The alpha and beta chains form an alternating ring which encloses part of the gamma chain. F(1) is attached to F(0) by a central stalk formed by the gamma and epsilon chains, while a peripheral stalk is formed by the delta, b and b' chains.</text>
</comment>
<comment type="subcellular location">
    <subcellularLocation>
        <location evidence="1">Cellular thylakoid membrane</location>
        <topology evidence="1">Peripheral membrane protein</topology>
    </subcellularLocation>
</comment>
<comment type="similarity">
    <text evidence="1">Belongs to the ATPase delta chain family.</text>
</comment>
<feature type="chain" id="PRO_0000371176" description="ATP synthase subunit delta">
    <location>
        <begin position="1"/>
        <end position="182"/>
    </location>
</feature>
<keyword id="KW-0066">ATP synthesis</keyword>
<keyword id="KW-0139">CF(1)</keyword>
<keyword id="KW-0375">Hydrogen ion transport</keyword>
<keyword id="KW-0406">Ion transport</keyword>
<keyword id="KW-0472">Membrane</keyword>
<keyword id="KW-0793">Thylakoid</keyword>
<keyword id="KW-0813">Transport</keyword>